<gene>
    <name type="primary">fdxA</name>
    <name type="ordered locus">PF1909</name>
</gene>
<organism>
    <name type="scientific">Pyrococcus furiosus (strain ATCC 43587 / DSM 3638 / JCM 8422 / Vc1)</name>
    <dbReference type="NCBI Taxonomy" id="186497"/>
    <lineage>
        <taxon>Archaea</taxon>
        <taxon>Methanobacteriati</taxon>
        <taxon>Methanobacteriota</taxon>
        <taxon>Thermococci</taxon>
        <taxon>Thermococcales</taxon>
        <taxon>Thermococcaceae</taxon>
        <taxon>Pyrococcus</taxon>
    </lineage>
</organism>
<evidence type="ECO:0000255" key="1">
    <source>
        <dbReference type="PROSITE-ProRule" id="PRU00711"/>
    </source>
</evidence>
<evidence type="ECO:0000269" key="2">
    <source>
    </source>
</evidence>
<evidence type="ECO:0000269" key="3">
    <source>
    </source>
</evidence>
<evidence type="ECO:0000269" key="4">
    <source>
    </source>
</evidence>
<evidence type="ECO:0000269" key="5">
    <source>
    </source>
</evidence>
<evidence type="ECO:0000269" key="6">
    <source ref="12"/>
</evidence>
<evidence type="ECO:0000269" key="7">
    <source ref="13"/>
</evidence>
<evidence type="ECO:0000269" key="8">
    <source ref="4"/>
</evidence>
<evidence type="ECO:0000305" key="9"/>
<evidence type="ECO:0007829" key="10">
    <source>
        <dbReference type="PDB" id="1SJ1"/>
    </source>
</evidence>
<feature type="initiator methionine" description="Removed">
    <location>
        <position position="1"/>
    </location>
</feature>
<feature type="chain" id="PRO_0000159199" description="Ferredoxin">
    <location>
        <begin position="2"/>
        <end position="67"/>
    </location>
</feature>
<feature type="domain" description="4Fe-4S ferredoxin-type 1" evidence="1">
    <location>
        <begin position="3"/>
        <end position="31"/>
    </location>
</feature>
<feature type="domain" description="4Fe-4S ferredoxin-type 2" evidence="1">
    <location>
        <begin position="36"/>
        <end position="67"/>
    </location>
</feature>
<feature type="binding site">
    <location>
        <position position="12"/>
    </location>
    <ligand>
        <name>[4Fe-4S] cluster</name>
        <dbReference type="ChEBI" id="CHEBI:49883"/>
    </ligand>
</feature>
<feature type="binding site">
    <location>
        <position position="15"/>
    </location>
    <ligand>
        <name>[4Fe-4S] cluster</name>
        <dbReference type="ChEBI" id="CHEBI:49883"/>
    </ligand>
</feature>
<feature type="binding site">
    <location>
        <position position="18"/>
    </location>
    <ligand>
        <name>[4Fe-4S] cluster</name>
        <dbReference type="ChEBI" id="CHEBI:49883"/>
    </ligand>
</feature>
<feature type="binding site">
    <location>
        <position position="57"/>
    </location>
    <ligand>
        <name>[4Fe-4S] cluster</name>
        <dbReference type="ChEBI" id="CHEBI:49883"/>
    </ligand>
</feature>
<feature type="disulfide bond" evidence="3 4">
    <location>
        <begin position="22"/>
        <end position="49"/>
    </location>
</feature>
<feature type="mutagenesis site" description="No effect on the efficiency of electron transfer." evidence="5 6 7">
    <original>D</original>
    <variation>C</variation>
    <location>
        <position position="15"/>
    </location>
</feature>
<feature type="mutagenesis site" description="The efficiency of electron transfer is compromised." evidence="5 6 7">
    <original>D</original>
    <variation>S</variation>
    <location>
        <position position="15"/>
    </location>
</feature>
<feature type="mutagenesis site" description="The mixed spin cluster is converted into a homogeneous spin cluster (S=3/2)." evidence="2 8">
    <original>A</original>
    <variation>C</variation>
    <location>
        <position position="34"/>
    </location>
</feature>
<feature type="strand" evidence="10">
    <location>
        <begin position="3"/>
        <end position="7"/>
    </location>
</feature>
<feature type="turn" evidence="10">
    <location>
        <begin position="9"/>
        <end position="11"/>
    </location>
</feature>
<feature type="helix" evidence="10">
    <location>
        <begin position="17"/>
        <end position="21"/>
    </location>
</feature>
<feature type="turn" evidence="10">
    <location>
        <begin position="23"/>
        <end position="25"/>
    </location>
</feature>
<feature type="strand" evidence="10">
    <location>
        <begin position="26"/>
        <end position="28"/>
    </location>
</feature>
<feature type="strand" evidence="10">
    <location>
        <begin position="34"/>
        <end position="37"/>
    </location>
</feature>
<feature type="helix" evidence="10">
    <location>
        <begin position="44"/>
        <end position="56"/>
    </location>
</feature>
<feature type="strand" evidence="10">
    <location>
        <begin position="62"/>
        <end position="66"/>
    </location>
</feature>
<comment type="function">
    <text>Ferredoxins are iron-sulfur proteins that transfer electrons in a wide variety of metabolic reactions.</text>
</comment>
<comment type="cofactor">
    <cofactor>
        <name>[4Fe-4S] cluster</name>
        <dbReference type="ChEBI" id="CHEBI:49883"/>
    </cofactor>
    <cofactor>
        <name>[3Fe-4S] cluster</name>
        <dbReference type="ChEBI" id="CHEBI:21137"/>
    </cofactor>
    <text>Binds 1 [4Fe-4S] cluster which readily converts to a stable [3Fe-4S] form.</text>
</comment>
<comment type="subunit">
    <text evidence="9">Homodimer.</text>
</comment>
<sequence length="67" mass="7298">MAWKVSVDQDTCIGDAICASLCPDVFEMNDEGKAQPKVEVIEDEELYNCAKEAMEACPVSAITIEEA</sequence>
<protein>
    <recommendedName>
        <fullName>Ferredoxin</fullName>
    </recommendedName>
</protein>
<name>FER_PYRFU</name>
<reference key="1">
    <citation type="journal article" date="1994" name="J. Bacteriol.">
        <title>Cloning, expression, and molecular characterization of the gene encoding an extremely thermostable [4Fe-4S] ferredoxin from the hyperthermophilic archaeon Pyrococcus furiosus.</title>
        <authorList>
            <person name="Heltzel A."/>
            <person name="Smith E.T."/>
            <person name="Zhou Z.H."/>
            <person name="Blamey J.M."/>
            <person name="Adams M.W.W."/>
        </authorList>
    </citation>
    <scope>NUCLEOTIDE SEQUENCE [GENOMIC DNA]</scope>
    <source>
        <strain>ATCC 43587 / DSM 3638 / JCM 8422 / Vc1</strain>
    </source>
</reference>
<reference key="2">
    <citation type="journal article" date="1999" name="Genetics">
        <title>Divergence of the hyperthermophilic archaea Pyrococcus furiosus and P. horikoshii inferred from complete genomic sequences.</title>
        <authorList>
            <person name="Maeder D.L."/>
            <person name="Weiss R.B."/>
            <person name="Dunn D.M."/>
            <person name="Cherry J.L."/>
            <person name="Gonzalez J.M."/>
            <person name="DiRuggiero J."/>
            <person name="Robb F.T."/>
        </authorList>
    </citation>
    <scope>NUCLEOTIDE SEQUENCE [LARGE SCALE GENOMIC DNA]</scope>
    <source>
        <strain>ATCC 43587 / DSM 3638 / JCM 8422 / Vc1</strain>
    </source>
</reference>
<reference key="3">
    <citation type="journal article" date="1997" name="Biochemistry">
        <title>Site-directed mutations of the 4Fe-ferredoxin from the hyperthermophilic archaeon Pyrococcus furiosus: role of the cluster-coordinating aspartate in physiological electron transfer reactions.</title>
        <authorList>
            <person name="Zhou Z.H."/>
            <person name="Adams M.W.W."/>
        </authorList>
    </citation>
    <scope>MUTAGENESIS OF ASP-15</scope>
    <scope>CIRCULAR DICHROISM ANALYSIS</scope>
    <scope>EPR SPECTROSCOPY</scope>
</reference>
<reference key="4">
    <citation type="journal article" date="1998" name="J. Am. Chem. Soc.">
        <title>Spectroscopic evidence for a new type of [Fe3S4] cluster in a mutant form of Pyrococcus furiosus ferredoxin.</title>
        <authorList>
            <person name="Duderstadt R.E."/>
            <person name="Brereton P.S."/>
            <person name="Adams M.W.W."/>
            <person name="Johnson M.K."/>
        </authorList>
    </citation>
    <scope>MUTAGENESIS OF ALA-34</scope>
    <scope>MAGNETIC CIRCULAR DICHROISM</scope>
    <scope>EPR SPECTROSCOPY</scope>
    <scope>RESONANCE RAMAN SPECTROSCOPY OF (3FE--4S) FORM</scope>
</reference>
<reference key="5">
    <citation type="journal article" date="1999" name="Biochemistry">
        <title>Effect of serinate ligation at each of the iron sites of the [Fe4S4] cluster of Pyrococcus furiosus ferredoxin on the redox, spectroscopic, and biological properties.</title>
        <authorList>
            <person name="Brereton P.S."/>
            <person name="Duderstadt R.E."/>
            <person name="Staples C.R."/>
            <person name="Johnson M.K."/>
            <person name="Adams M.W.W."/>
        </authorList>
    </citation>
    <scope>MUTAGENESIS OF CYSTEINE RESIDUES</scope>
    <scope>MAGNETIC CIRCULAR DICHROISM</scope>
    <scope>EPR SPECTROSCOPY</scope>
    <scope>RESONANCE RAMAN SPECTROSCOPY</scope>
</reference>
<reference key="6">
    <citation type="journal article" date="1999" name="FEBS Lett.">
        <title>A pure S=3/2 [Fe4S4]+ cluster in the A33Y variant of Pyrococcus furiosus ferredoxin.</title>
        <authorList>
            <person name="Duderstadt R.E."/>
            <person name="Brereton P.S."/>
            <person name="Adams M.W.W."/>
            <person name="Johnson M.K."/>
        </authorList>
    </citation>
    <scope>MUTAGENESIS OF ALA-34</scope>
    <scope>MAGNETIC CIRCULAR DICHROISM</scope>
    <scope>EPR SPECTROSCOPY</scope>
    <scope>RESONANCE RAMAN SPECTROSCOPY</scope>
</reference>
<reference key="7">
    <citation type="journal article" date="1992" name="Biochemistry">
        <title>Proton NMR investigation of the oxidized three-iron clusters in the ferredoxins from the hyperthermophilic archae Pyrococcus furiosus and Thermococcus litoralis.</title>
        <authorList>
            <person name="Busse S.C."/>
            <person name="la Mar G.N."/>
            <person name="Yu L.P."/>
            <person name="Howard J.B."/>
            <person name="Smith E.T."/>
            <person name="Zhou Z.H."/>
            <person name="Adams M.W.W."/>
        </authorList>
    </citation>
    <scope>STRUCTURE BY NMR</scope>
</reference>
<reference key="8">
    <citation type="journal article" date="1994" name="Biochemistry">
        <title>Solution 1H NMR determination of secondary structure for the three-iron form of ferredoxin from the hyperthermophilic archaeon Pyrococcus furiosus.</title>
        <authorList>
            <person name="Teng Q."/>
            <person name="Zhou Z.H."/>
            <person name="Smith E.T."/>
            <person name="Busse S.C."/>
            <person name="Howard J.B."/>
            <person name="Adams M.W.W."/>
            <person name="La Mar G.N."/>
        </authorList>
    </citation>
    <scope>STRUCTURE BY NMR OF 3FE--4S FORM</scope>
</reference>
<reference key="9">
    <citation type="journal article" date="1995" name="Biochemistry">
        <title>1H NMR investigation of the electronic and molecular structure of the four-iron cluster ferredoxin from the hyperthermophile Pyrococcus furiosus. Identification of Asp 14 as a cluster ligand in each of the four redox states.</title>
        <authorList>
            <person name="Calzolai L."/>
            <person name="Gorst C.M."/>
            <person name="Zhou Z.H."/>
            <person name="Teng Q."/>
            <person name="Adams M.W.W."/>
            <person name="La Mar G.N."/>
        </authorList>
    </citation>
    <scope>STRUCTURE BY NMR</scope>
</reference>
<reference key="10">
    <citation type="journal article" date="1995" name="Biochemistry">
        <title>1H NMR investigation of the paramagnetic cluster environment in Pyrococcus furiosus three-iron ferredoxin: sequence-specific assignment of ligated cysteines independent of tertiary structure.</title>
        <authorList>
            <person name="Gorst C.M."/>
            <person name="Yeh Y.-H."/>
            <person name="Teng Q."/>
            <person name="Calzolai L."/>
            <person name="Zhou Z.H."/>
            <person name="Adams M.W.W."/>
            <person name="La Mar G.N."/>
        </authorList>
    </citation>
    <scope>STRUCTURE BY NMR OF 3FE--4S FORM</scope>
</reference>
<reference key="11">
    <citation type="journal article" date="1995" name="Biochemistry">
        <title>Participation of the disulfide bridge in the redox cycle of the ferredoxin from the hyperthermophile Pyrococcus furiosus: 1H nuclear magnetic resonance time resolution of the four redox states at ambient temperature.</title>
        <authorList>
            <person name="Gorst C.M."/>
            <person name="Zhou Z.H."/>
            <person name="Teng Q."/>
            <person name="Howard J.B."/>
            <person name="Adams M.W.W."/>
            <person name="La Mar G.N."/>
        </authorList>
    </citation>
    <scope>STRUCTURE BY NMR</scope>
    <scope>DISULFIDE BOND</scope>
</reference>
<reference key="12">
    <citation type="journal article" date="1996" name="J. Am. Chem. Soc.">
        <title>Role of cluster-ligated aspartate in gating electron transfer in the four-iron ferredoxin from the hyperthermophilic archaeon Pyrococcus furiosus.</title>
        <authorList>
            <person name="Calzolai L."/>
            <person name="Zhou Z.H."/>
            <person name="Adams M.W.W."/>
            <person name="La Mar G.N."/>
        </authorList>
    </citation>
    <scope>STRUCTURE BY NMR</scope>
    <scope>MUTAGENESIS OF ASP-15</scope>
</reference>
<reference key="13">
    <citation type="journal article" date="1997" name="J. Am. Chem. Soc.">
        <title>Solution NMR study of the electronic structure and magnetic properties of cluster ligation mutants of the four-iron ferredoxin from the hyperthermophilic archaeon Pyrococcus furiosus.</title>
        <authorList>
            <person name="Calzolai L."/>
            <person name="Gorst C.M."/>
            <person name="Bren K.L."/>
            <person name="Zhou Z.H."/>
            <person name="Adams M.W.W."/>
            <person name="La Mar G.N."/>
        </authorList>
    </citation>
    <scope>STRUCTURE BY NMR</scope>
    <scope>MUTAGENESIS OF ASP-15</scope>
</reference>
<reference key="14">
    <citation type="journal article" date="2001" name="Biochemistry">
        <title>Solution NMR characterization of the thermodynamics of the disulfide bond orientational isomerism and its effect of cluster electronic properties for the hyperthermostable three-iron cluster ferredoxin from the archaeon Pyrococcus furiosus.</title>
        <authorList>
            <person name="Webba da Silva M."/>
            <person name="Sham S."/>
            <person name="Gorst C.M."/>
            <person name="Calzolai L."/>
            <person name="Brereton P.S."/>
            <person name="Adams M.W.W."/>
            <person name="La Mar G.N."/>
        </authorList>
    </citation>
    <scope>STRUCTURE BY NMR OF 3FE--4S FORM</scope>
</reference>
<reference key="15">
    <citation type="journal article" date="2004" name="Biochemistry">
        <title>The 1.5 A resolution crystal structure of [Fe3S4]-ferredoxin from the hyperthermophilic archaeon Pyrococcus furiosus.</title>
        <authorList>
            <person name="Nielsen M.S."/>
            <person name="Harris P."/>
            <person name="Ooi B.L."/>
            <person name="Christensen H.E."/>
        </authorList>
    </citation>
    <scope>X-RAY CRYSTALLOGRAPHY (1.5 ANGSTROMS) IN COMPLEX WITH IRON-SULFUR CLUSTER</scope>
    <scope>SUBUNIT</scope>
</reference>
<proteinExistence type="evidence at protein level"/>
<keyword id="KW-0002">3D-structure</keyword>
<keyword id="KW-0003">3Fe-4S</keyword>
<keyword id="KW-0004">4Fe-4S</keyword>
<keyword id="KW-1015">Disulfide bond</keyword>
<keyword id="KW-0249">Electron transport</keyword>
<keyword id="KW-0408">Iron</keyword>
<keyword id="KW-0411">Iron-sulfur</keyword>
<keyword id="KW-0479">Metal-binding</keyword>
<keyword id="KW-1185">Reference proteome</keyword>
<keyword id="KW-0677">Repeat</keyword>
<keyword id="KW-0813">Transport</keyword>
<dbReference type="EMBL" id="X79502">
    <property type="protein sequence ID" value="CAA56040.1"/>
    <property type="molecule type" value="Genomic_DNA"/>
</dbReference>
<dbReference type="EMBL" id="AE009950">
    <property type="protein sequence ID" value="AAL82033.1"/>
    <property type="molecule type" value="Genomic_DNA"/>
</dbReference>
<dbReference type="PIR" id="A44203">
    <property type="entry name" value="A44203"/>
</dbReference>
<dbReference type="RefSeq" id="WP_011013049.1">
    <property type="nucleotide sequence ID" value="NZ_CP023154.1"/>
</dbReference>
<dbReference type="PDB" id="1SIZ">
    <property type="method" value="X-ray"/>
    <property type="resolution" value="2.25 A"/>
    <property type="chains" value="A/C=2-67"/>
</dbReference>
<dbReference type="PDB" id="1SJ1">
    <property type="method" value="X-ray"/>
    <property type="resolution" value="1.50 A"/>
    <property type="chains" value="A/B=2-67"/>
</dbReference>
<dbReference type="PDB" id="2Z8Q">
    <property type="method" value="X-ray"/>
    <property type="resolution" value="1.70 A"/>
    <property type="chains" value="A/B=2-67"/>
</dbReference>
<dbReference type="PDB" id="3PNI">
    <property type="method" value="X-ray"/>
    <property type="resolution" value="2.80 A"/>
    <property type="chains" value="A/B=2-67"/>
</dbReference>
<dbReference type="PDB" id="4DHV">
    <property type="method" value="X-ray"/>
    <property type="resolution" value="1.95 A"/>
    <property type="chains" value="A/B=2-67"/>
</dbReference>
<dbReference type="PDBsum" id="1SIZ"/>
<dbReference type="PDBsum" id="1SJ1"/>
<dbReference type="PDBsum" id="2Z8Q"/>
<dbReference type="PDBsum" id="3PNI"/>
<dbReference type="PDBsum" id="4DHV"/>
<dbReference type="SMR" id="P29603"/>
<dbReference type="STRING" id="186497.PF1909"/>
<dbReference type="PaxDb" id="186497-PF1909"/>
<dbReference type="KEGG" id="pfu:PF1909"/>
<dbReference type="PATRIC" id="fig|186497.12.peg.1980"/>
<dbReference type="eggNOG" id="arCOG00349">
    <property type="taxonomic scope" value="Archaea"/>
</dbReference>
<dbReference type="HOGENOM" id="CLU_139698_6_4_2"/>
<dbReference type="OrthoDB" id="5583at2157"/>
<dbReference type="PhylomeDB" id="P29603"/>
<dbReference type="EvolutionaryTrace" id="P29603"/>
<dbReference type="Proteomes" id="UP000001013">
    <property type="component" value="Chromosome"/>
</dbReference>
<dbReference type="GO" id="GO:0051538">
    <property type="term" value="F:3 iron, 4 sulfur cluster binding"/>
    <property type="evidence" value="ECO:0007669"/>
    <property type="project" value="UniProtKB-KW"/>
</dbReference>
<dbReference type="GO" id="GO:0051539">
    <property type="term" value="F:4 iron, 4 sulfur cluster binding"/>
    <property type="evidence" value="ECO:0007669"/>
    <property type="project" value="UniProtKB-KW"/>
</dbReference>
<dbReference type="GO" id="GO:0009055">
    <property type="term" value="F:electron transfer activity"/>
    <property type="evidence" value="ECO:0007669"/>
    <property type="project" value="InterPro"/>
</dbReference>
<dbReference type="GO" id="GO:0005506">
    <property type="term" value="F:iron ion binding"/>
    <property type="evidence" value="ECO:0007669"/>
    <property type="project" value="InterPro"/>
</dbReference>
<dbReference type="Gene3D" id="3.30.70.20">
    <property type="match status" value="1"/>
</dbReference>
<dbReference type="InterPro" id="IPR001080">
    <property type="entry name" value="3Fe4S_ferredoxin"/>
</dbReference>
<dbReference type="InterPro" id="IPR017896">
    <property type="entry name" value="4Fe4S_Fe-S-bd"/>
</dbReference>
<dbReference type="InterPro" id="IPR051269">
    <property type="entry name" value="Fe-S_cluster_ET"/>
</dbReference>
<dbReference type="PANTHER" id="PTHR36923">
    <property type="entry name" value="FERREDOXIN"/>
    <property type="match status" value="1"/>
</dbReference>
<dbReference type="PANTHER" id="PTHR36923:SF3">
    <property type="entry name" value="FERREDOXIN"/>
    <property type="match status" value="1"/>
</dbReference>
<dbReference type="Pfam" id="PF13370">
    <property type="entry name" value="Fer4_13"/>
    <property type="match status" value="1"/>
</dbReference>
<dbReference type="PRINTS" id="PR00352">
    <property type="entry name" value="3FE4SFRDOXIN"/>
</dbReference>
<dbReference type="SUPFAM" id="SSF54862">
    <property type="entry name" value="4Fe-4S ferredoxins"/>
    <property type="match status" value="1"/>
</dbReference>
<dbReference type="PROSITE" id="PS51379">
    <property type="entry name" value="4FE4S_FER_2"/>
    <property type="match status" value="2"/>
</dbReference>
<accession>P29603</accession>